<feature type="chain" id="PRO_0000329253" description="Phosphate acyltransferase">
    <location>
        <begin position="1"/>
        <end position="336"/>
    </location>
</feature>
<reference key="1">
    <citation type="journal article" date="2009" name="Genome Biol.">
        <title>Genomic and genetic analyses of diversity and plant interactions of Pseudomonas fluorescens.</title>
        <authorList>
            <person name="Silby M.W."/>
            <person name="Cerdeno-Tarraga A.M."/>
            <person name="Vernikos G.S."/>
            <person name="Giddens S.R."/>
            <person name="Jackson R.W."/>
            <person name="Preston G.M."/>
            <person name="Zhang X.-X."/>
            <person name="Moon C.D."/>
            <person name="Gehrig S.M."/>
            <person name="Godfrey S.A.C."/>
            <person name="Knight C.G."/>
            <person name="Malone J.G."/>
            <person name="Robinson Z."/>
            <person name="Spiers A.J."/>
            <person name="Harris S."/>
            <person name="Challis G.L."/>
            <person name="Yaxley A.M."/>
            <person name="Harris D."/>
            <person name="Seeger K."/>
            <person name="Murphy L."/>
            <person name="Rutter S."/>
            <person name="Squares R."/>
            <person name="Quail M.A."/>
            <person name="Saunders E."/>
            <person name="Mavromatis K."/>
            <person name="Brettin T.S."/>
            <person name="Bentley S.D."/>
            <person name="Hothersall J."/>
            <person name="Stephens E."/>
            <person name="Thomas C.M."/>
            <person name="Parkhill J."/>
            <person name="Levy S.B."/>
            <person name="Rainey P.B."/>
            <person name="Thomson N.R."/>
        </authorList>
    </citation>
    <scope>NUCLEOTIDE SEQUENCE [LARGE SCALE GENOMIC DNA]</scope>
    <source>
        <strain>Pf0-1</strain>
    </source>
</reference>
<proteinExistence type="inferred from homology"/>
<gene>
    <name evidence="1" type="primary">plsX</name>
    <name type="ordered locus">Pfl01_4159</name>
</gene>
<accession>Q3K8K8</accession>
<comment type="function">
    <text evidence="1">Catalyzes the reversible formation of acyl-phosphate (acyl-PO(4)) from acyl-[acyl-carrier-protein] (acyl-ACP). This enzyme utilizes acyl-ACP as fatty acyl donor, but not acyl-CoA.</text>
</comment>
<comment type="catalytic activity">
    <reaction evidence="1">
        <text>a fatty acyl-[ACP] + phosphate = an acyl phosphate + holo-[ACP]</text>
        <dbReference type="Rhea" id="RHEA:42292"/>
        <dbReference type="Rhea" id="RHEA-COMP:9685"/>
        <dbReference type="Rhea" id="RHEA-COMP:14125"/>
        <dbReference type="ChEBI" id="CHEBI:43474"/>
        <dbReference type="ChEBI" id="CHEBI:59918"/>
        <dbReference type="ChEBI" id="CHEBI:64479"/>
        <dbReference type="ChEBI" id="CHEBI:138651"/>
        <dbReference type="EC" id="2.3.1.274"/>
    </reaction>
</comment>
<comment type="pathway">
    <text evidence="1">Lipid metabolism; phospholipid metabolism.</text>
</comment>
<comment type="subunit">
    <text evidence="1">Homodimer. Probably interacts with PlsY.</text>
</comment>
<comment type="subcellular location">
    <subcellularLocation>
        <location evidence="1">Cytoplasm</location>
    </subcellularLocation>
    <text evidence="1">Associated with the membrane possibly through PlsY.</text>
</comment>
<comment type="similarity">
    <text evidence="1">Belongs to the PlsX family.</text>
</comment>
<comment type="sequence caution" evidence="2">
    <conflict type="erroneous initiation">
        <sequence resource="EMBL-CDS" id="ABA75896"/>
    </conflict>
</comment>
<organism>
    <name type="scientific">Pseudomonas fluorescens (strain Pf0-1)</name>
    <dbReference type="NCBI Taxonomy" id="205922"/>
    <lineage>
        <taxon>Bacteria</taxon>
        <taxon>Pseudomonadati</taxon>
        <taxon>Pseudomonadota</taxon>
        <taxon>Gammaproteobacteria</taxon>
        <taxon>Pseudomonadales</taxon>
        <taxon>Pseudomonadaceae</taxon>
        <taxon>Pseudomonas</taxon>
    </lineage>
</organism>
<dbReference type="EC" id="2.3.1.274" evidence="1"/>
<dbReference type="EMBL" id="CP000094">
    <property type="protein sequence ID" value="ABA75896.1"/>
    <property type="status" value="ALT_INIT"/>
    <property type="molecule type" value="Genomic_DNA"/>
</dbReference>
<dbReference type="SMR" id="Q3K8K8"/>
<dbReference type="KEGG" id="pfo:Pfl01_4159"/>
<dbReference type="eggNOG" id="COG0416">
    <property type="taxonomic scope" value="Bacteria"/>
</dbReference>
<dbReference type="HOGENOM" id="CLU_039379_1_0_6"/>
<dbReference type="UniPathway" id="UPA00085"/>
<dbReference type="Proteomes" id="UP000002704">
    <property type="component" value="Chromosome"/>
</dbReference>
<dbReference type="GO" id="GO:0005737">
    <property type="term" value="C:cytoplasm"/>
    <property type="evidence" value="ECO:0007669"/>
    <property type="project" value="UniProtKB-SubCell"/>
</dbReference>
<dbReference type="GO" id="GO:0043811">
    <property type="term" value="F:phosphate:acyl-[acyl carrier protein] acyltransferase activity"/>
    <property type="evidence" value="ECO:0007669"/>
    <property type="project" value="UniProtKB-UniRule"/>
</dbReference>
<dbReference type="GO" id="GO:0006633">
    <property type="term" value="P:fatty acid biosynthetic process"/>
    <property type="evidence" value="ECO:0007669"/>
    <property type="project" value="UniProtKB-UniRule"/>
</dbReference>
<dbReference type="GO" id="GO:0008654">
    <property type="term" value="P:phospholipid biosynthetic process"/>
    <property type="evidence" value="ECO:0007669"/>
    <property type="project" value="UniProtKB-KW"/>
</dbReference>
<dbReference type="Gene3D" id="3.40.718.10">
    <property type="entry name" value="Isopropylmalate Dehydrogenase"/>
    <property type="match status" value="1"/>
</dbReference>
<dbReference type="HAMAP" id="MF_00019">
    <property type="entry name" value="PlsX"/>
    <property type="match status" value="1"/>
</dbReference>
<dbReference type="InterPro" id="IPR003664">
    <property type="entry name" value="FA_synthesis"/>
</dbReference>
<dbReference type="InterPro" id="IPR012281">
    <property type="entry name" value="Phospholipid_synth_PlsX-like"/>
</dbReference>
<dbReference type="NCBIfam" id="TIGR00182">
    <property type="entry name" value="plsX"/>
    <property type="match status" value="1"/>
</dbReference>
<dbReference type="PANTHER" id="PTHR30100">
    <property type="entry name" value="FATTY ACID/PHOSPHOLIPID SYNTHESIS PROTEIN PLSX"/>
    <property type="match status" value="1"/>
</dbReference>
<dbReference type="PANTHER" id="PTHR30100:SF1">
    <property type="entry name" value="PHOSPHATE ACYLTRANSFERASE"/>
    <property type="match status" value="1"/>
</dbReference>
<dbReference type="Pfam" id="PF02504">
    <property type="entry name" value="FA_synthesis"/>
    <property type="match status" value="1"/>
</dbReference>
<dbReference type="PIRSF" id="PIRSF002465">
    <property type="entry name" value="Phsphlp_syn_PlsX"/>
    <property type="match status" value="1"/>
</dbReference>
<dbReference type="SUPFAM" id="SSF53659">
    <property type="entry name" value="Isocitrate/Isopropylmalate dehydrogenase-like"/>
    <property type="match status" value="1"/>
</dbReference>
<keyword id="KW-0963">Cytoplasm</keyword>
<keyword id="KW-0444">Lipid biosynthesis</keyword>
<keyword id="KW-0443">Lipid metabolism</keyword>
<keyword id="KW-0594">Phospholipid biosynthesis</keyword>
<keyword id="KW-1208">Phospholipid metabolism</keyword>
<keyword id="KW-0808">Transferase</keyword>
<evidence type="ECO:0000255" key="1">
    <source>
        <dbReference type="HAMAP-Rule" id="MF_00019"/>
    </source>
</evidence>
<evidence type="ECO:0000305" key="2"/>
<protein>
    <recommendedName>
        <fullName evidence="1">Phosphate acyltransferase</fullName>
        <ecNumber evidence="1">2.3.1.274</ecNumber>
    </recommendedName>
    <alternativeName>
        <fullName evidence="1">Acyl-ACP phosphotransacylase</fullName>
    </alternativeName>
    <alternativeName>
        <fullName evidence="1">Acyl-[acyl-carrier-protein]--phosphate acyltransferase</fullName>
    </alternativeName>
    <alternativeName>
        <fullName evidence="1">Phosphate-acyl-ACP acyltransferase</fullName>
    </alternativeName>
</protein>
<sequence>MSAQVIAIDAMGGDFGPRSIVQASLACLSATPSLHLTLVGQPSLLEELITGQSAADRARLTIVPASEVITMDEKPAQALRGKPDSSMRVALELLRDGKVQACVSAGNTGALMALSRFVLKTLPGIDRPAMVAAIPTQKGYCQLLDLGANVDCSAEHLLQFAVMGSVAAQTLGIARPRVALLNIGTEDIKGNQQVKLAATLLQAARGINYIGFIEGDGLYRGEADVVVCDGFVGNILLKSSEGLATMIAARIEALFKKNLASRAVGALALPLMRRLQADLAPARHNGASFLGLQGIVVKSHGSAGVQGFQSAIQRALIEIQENLPERLHGRLEDLLS</sequence>
<name>PLSX_PSEPF</name>